<feature type="chain" id="PRO_0000185655" description="Nucleosome assembly protein 1-like 2">
    <location>
        <begin position="1"/>
        <end position="460"/>
    </location>
</feature>
<feature type="region of interest" description="Disordered" evidence="3">
    <location>
        <begin position="1"/>
        <end position="88"/>
    </location>
</feature>
<feature type="region of interest" description="Disordered" evidence="3">
    <location>
        <begin position="214"/>
        <end position="238"/>
    </location>
</feature>
<feature type="short sequence motif" description="Nuclear localization signal" evidence="2">
    <location>
        <begin position="346"/>
        <end position="352"/>
    </location>
</feature>
<feature type="compositionally biased region" description="Basic and acidic residues" evidence="3">
    <location>
        <begin position="1"/>
        <end position="11"/>
    </location>
</feature>
<feature type="compositionally biased region" description="Basic and acidic residues" evidence="3">
    <location>
        <begin position="27"/>
        <end position="36"/>
    </location>
</feature>
<feature type="compositionally biased region" description="Acidic residues" evidence="3">
    <location>
        <begin position="214"/>
        <end position="236"/>
    </location>
</feature>
<feature type="splice variant" id="VSP_057064" description="In isoform 2." evidence="4">
    <location>
        <begin position="1"/>
        <end position="142"/>
    </location>
</feature>
<feature type="sequence conflict" description="In Ref. 7; AAH26325." evidence="5" ref="7">
    <original>E</original>
    <variation>K</variation>
    <location>
        <position position="3"/>
    </location>
</feature>
<gene>
    <name type="primary">NAP1L2</name>
    <name type="synonym">BPX</name>
</gene>
<protein>
    <recommendedName>
        <fullName>Nucleosome assembly protein 1-like 2</fullName>
    </recommendedName>
    <alternativeName>
        <fullName>Brain-specific protein, X-linked</fullName>
    </alternativeName>
</protein>
<reference key="1">
    <citation type="submission" date="1999-05" db="EMBL/GenBank/DDBJ databases">
        <authorList>
            <person name="Seki N."/>
            <person name="Hattori A."/>
            <person name="Hayashi A."/>
            <person name="Kozuma S."/>
            <person name="Muramatsu M."/>
            <person name="Miyajima N."/>
            <person name="Saito T."/>
        </authorList>
    </citation>
    <scope>NUCLEOTIDE SEQUENCE [MRNA] (ISOFORM 1)</scope>
</reference>
<reference key="2">
    <citation type="submission" date="1999-03" db="EMBL/GenBank/DDBJ databases">
        <title>Cloning of a new human cDNA homologous to Mus musculus Bpx protein.</title>
        <authorList>
            <person name="Li N.G."/>
            <person name="Yu L."/>
            <person name="Zhao S.Y."/>
        </authorList>
    </citation>
    <scope>NUCLEOTIDE SEQUENCE [MRNA] (ISOFORM 1)</scope>
</reference>
<reference key="3">
    <citation type="submission" date="2004-06" db="EMBL/GenBank/DDBJ databases">
        <title>Cloning of human full open reading frames in Gateway(TM) system entry vector (pDONR201).</title>
        <authorList>
            <person name="Ebert L."/>
            <person name="Schick M."/>
            <person name="Neubert P."/>
            <person name="Schatten R."/>
            <person name="Henze S."/>
            <person name="Korn B."/>
        </authorList>
    </citation>
    <scope>NUCLEOTIDE SEQUENCE [LARGE SCALE MRNA] (ISOFORM 1)</scope>
</reference>
<reference key="4">
    <citation type="journal article" date="2004" name="Nat. Genet.">
        <title>Complete sequencing and characterization of 21,243 full-length human cDNAs.</title>
        <authorList>
            <person name="Ota T."/>
            <person name="Suzuki Y."/>
            <person name="Nishikawa T."/>
            <person name="Otsuki T."/>
            <person name="Sugiyama T."/>
            <person name="Irie R."/>
            <person name="Wakamatsu A."/>
            <person name="Hayashi K."/>
            <person name="Sato H."/>
            <person name="Nagai K."/>
            <person name="Kimura K."/>
            <person name="Makita H."/>
            <person name="Sekine M."/>
            <person name="Obayashi M."/>
            <person name="Nishi T."/>
            <person name="Shibahara T."/>
            <person name="Tanaka T."/>
            <person name="Ishii S."/>
            <person name="Yamamoto J."/>
            <person name="Saito K."/>
            <person name="Kawai Y."/>
            <person name="Isono Y."/>
            <person name="Nakamura Y."/>
            <person name="Nagahari K."/>
            <person name="Murakami K."/>
            <person name="Yasuda T."/>
            <person name="Iwayanagi T."/>
            <person name="Wagatsuma M."/>
            <person name="Shiratori A."/>
            <person name="Sudo H."/>
            <person name="Hosoiri T."/>
            <person name="Kaku Y."/>
            <person name="Kodaira H."/>
            <person name="Kondo H."/>
            <person name="Sugawara M."/>
            <person name="Takahashi M."/>
            <person name="Kanda K."/>
            <person name="Yokoi T."/>
            <person name="Furuya T."/>
            <person name="Kikkawa E."/>
            <person name="Omura Y."/>
            <person name="Abe K."/>
            <person name="Kamihara K."/>
            <person name="Katsuta N."/>
            <person name="Sato K."/>
            <person name="Tanikawa M."/>
            <person name="Yamazaki M."/>
            <person name="Ninomiya K."/>
            <person name="Ishibashi T."/>
            <person name="Yamashita H."/>
            <person name="Murakawa K."/>
            <person name="Fujimori K."/>
            <person name="Tanai H."/>
            <person name="Kimata M."/>
            <person name="Watanabe M."/>
            <person name="Hiraoka S."/>
            <person name="Chiba Y."/>
            <person name="Ishida S."/>
            <person name="Ono Y."/>
            <person name="Takiguchi S."/>
            <person name="Watanabe S."/>
            <person name="Yosida M."/>
            <person name="Hotuta T."/>
            <person name="Kusano J."/>
            <person name="Kanehori K."/>
            <person name="Takahashi-Fujii A."/>
            <person name="Hara H."/>
            <person name="Tanase T.-O."/>
            <person name="Nomura Y."/>
            <person name="Togiya S."/>
            <person name="Komai F."/>
            <person name="Hara R."/>
            <person name="Takeuchi K."/>
            <person name="Arita M."/>
            <person name="Imose N."/>
            <person name="Musashino K."/>
            <person name="Yuuki H."/>
            <person name="Oshima A."/>
            <person name="Sasaki N."/>
            <person name="Aotsuka S."/>
            <person name="Yoshikawa Y."/>
            <person name="Matsunawa H."/>
            <person name="Ichihara T."/>
            <person name="Shiohata N."/>
            <person name="Sano S."/>
            <person name="Moriya S."/>
            <person name="Momiyama H."/>
            <person name="Satoh N."/>
            <person name="Takami S."/>
            <person name="Terashima Y."/>
            <person name="Suzuki O."/>
            <person name="Nakagawa S."/>
            <person name="Senoh A."/>
            <person name="Mizoguchi H."/>
            <person name="Goto Y."/>
            <person name="Shimizu F."/>
            <person name="Wakebe H."/>
            <person name="Hishigaki H."/>
            <person name="Watanabe T."/>
            <person name="Sugiyama A."/>
            <person name="Takemoto M."/>
            <person name="Kawakami B."/>
            <person name="Yamazaki M."/>
            <person name="Watanabe K."/>
            <person name="Kumagai A."/>
            <person name="Itakura S."/>
            <person name="Fukuzumi Y."/>
            <person name="Fujimori Y."/>
            <person name="Komiyama M."/>
            <person name="Tashiro H."/>
            <person name="Tanigami A."/>
            <person name="Fujiwara T."/>
            <person name="Ono T."/>
            <person name="Yamada K."/>
            <person name="Fujii Y."/>
            <person name="Ozaki K."/>
            <person name="Hirao M."/>
            <person name="Ohmori Y."/>
            <person name="Kawabata A."/>
            <person name="Hikiji T."/>
            <person name="Kobatake N."/>
            <person name="Inagaki H."/>
            <person name="Ikema Y."/>
            <person name="Okamoto S."/>
            <person name="Okitani R."/>
            <person name="Kawakami T."/>
            <person name="Noguchi S."/>
            <person name="Itoh T."/>
            <person name="Shigeta K."/>
            <person name="Senba T."/>
            <person name="Matsumura K."/>
            <person name="Nakajima Y."/>
            <person name="Mizuno T."/>
            <person name="Morinaga M."/>
            <person name="Sasaki M."/>
            <person name="Togashi T."/>
            <person name="Oyama M."/>
            <person name="Hata H."/>
            <person name="Watanabe M."/>
            <person name="Komatsu T."/>
            <person name="Mizushima-Sugano J."/>
            <person name="Satoh T."/>
            <person name="Shirai Y."/>
            <person name="Takahashi Y."/>
            <person name="Nakagawa K."/>
            <person name="Okumura K."/>
            <person name="Nagase T."/>
            <person name="Nomura N."/>
            <person name="Kikuchi H."/>
            <person name="Masuho Y."/>
            <person name="Yamashita R."/>
            <person name="Nakai K."/>
            <person name="Yada T."/>
            <person name="Nakamura Y."/>
            <person name="Ohara O."/>
            <person name="Isogai T."/>
            <person name="Sugano S."/>
        </authorList>
    </citation>
    <scope>NUCLEOTIDE SEQUENCE [LARGE SCALE MRNA] (ISOFORMS 1 AND 2)</scope>
    <source>
        <tissue>Kidney</tissue>
        <tissue>Thymus</tissue>
    </source>
</reference>
<reference key="5">
    <citation type="journal article" date="2005" name="Nature">
        <title>The DNA sequence of the human X chromosome.</title>
        <authorList>
            <person name="Ross M.T."/>
            <person name="Grafham D.V."/>
            <person name="Coffey A.J."/>
            <person name="Scherer S."/>
            <person name="McLay K."/>
            <person name="Muzny D."/>
            <person name="Platzer M."/>
            <person name="Howell G.R."/>
            <person name="Burrows C."/>
            <person name="Bird C.P."/>
            <person name="Frankish A."/>
            <person name="Lovell F.L."/>
            <person name="Howe K.L."/>
            <person name="Ashurst J.L."/>
            <person name="Fulton R.S."/>
            <person name="Sudbrak R."/>
            <person name="Wen G."/>
            <person name="Jones M.C."/>
            <person name="Hurles M.E."/>
            <person name="Andrews T.D."/>
            <person name="Scott C.E."/>
            <person name="Searle S."/>
            <person name="Ramser J."/>
            <person name="Whittaker A."/>
            <person name="Deadman R."/>
            <person name="Carter N.P."/>
            <person name="Hunt S.E."/>
            <person name="Chen R."/>
            <person name="Cree A."/>
            <person name="Gunaratne P."/>
            <person name="Havlak P."/>
            <person name="Hodgson A."/>
            <person name="Metzker M.L."/>
            <person name="Richards S."/>
            <person name="Scott G."/>
            <person name="Steffen D."/>
            <person name="Sodergren E."/>
            <person name="Wheeler D.A."/>
            <person name="Worley K.C."/>
            <person name="Ainscough R."/>
            <person name="Ambrose K.D."/>
            <person name="Ansari-Lari M.A."/>
            <person name="Aradhya S."/>
            <person name="Ashwell R.I."/>
            <person name="Babbage A.K."/>
            <person name="Bagguley C.L."/>
            <person name="Ballabio A."/>
            <person name="Banerjee R."/>
            <person name="Barker G.E."/>
            <person name="Barlow K.F."/>
            <person name="Barrett I.P."/>
            <person name="Bates K.N."/>
            <person name="Beare D.M."/>
            <person name="Beasley H."/>
            <person name="Beasley O."/>
            <person name="Beck A."/>
            <person name="Bethel G."/>
            <person name="Blechschmidt K."/>
            <person name="Brady N."/>
            <person name="Bray-Allen S."/>
            <person name="Bridgeman A.M."/>
            <person name="Brown A.J."/>
            <person name="Brown M.J."/>
            <person name="Bonnin D."/>
            <person name="Bruford E.A."/>
            <person name="Buhay C."/>
            <person name="Burch P."/>
            <person name="Burford D."/>
            <person name="Burgess J."/>
            <person name="Burrill W."/>
            <person name="Burton J."/>
            <person name="Bye J.M."/>
            <person name="Carder C."/>
            <person name="Carrel L."/>
            <person name="Chako J."/>
            <person name="Chapman J.C."/>
            <person name="Chavez D."/>
            <person name="Chen E."/>
            <person name="Chen G."/>
            <person name="Chen Y."/>
            <person name="Chen Z."/>
            <person name="Chinault C."/>
            <person name="Ciccodicola A."/>
            <person name="Clark S.Y."/>
            <person name="Clarke G."/>
            <person name="Clee C.M."/>
            <person name="Clegg S."/>
            <person name="Clerc-Blankenburg K."/>
            <person name="Clifford K."/>
            <person name="Cobley V."/>
            <person name="Cole C.G."/>
            <person name="Conquer J.S."/>
            <person name="Corby N."/>
            <person name="Connor R.E."/>
            <person name="David R."/>
            <person name="Davies J."/>
            <person name="Davis C."/>
            <person name="Davis J."/>
            <person name="Delgado O."/>
            <person name="Deshazo D."/>
            <person name="Dhami P."/>
            <person name="Ding Y."/>
            <person name="Dinh H."/>
            <person name="Dodsworth S."/>
            <person name="Draper H."/>
            <person name="Dugan-Rocha S."/>
            <person name="Dunham A."/>
            <person name="Dunn M."/>
            <person name="Durbin K.J."/>
            <person name="Dutta I."/>
            <person name="Eades T."/>
            <person name="Ellwood M."/>
            <person name="Emery-Cohen A."/>
            <person name="Errington H."/>
            <person name="Evans K.L."/>
            <person name="Faulkner L."/>
            <person name="Francis F."/>
            <person name="Frankland J."/>
            <person name="Fraser A.E."/>
            <person name="Galgoczy P."/>
            <person name="Gilbert J."/>
            <person name="Gill R."/>
            <person name="Gloeckner G."/>
            <person name="Gregory S.G."/>
            <person name="Gribble S."/>
            <person name="Griffiths C."/>
            <person name="Grocock R."/>
            <person name="Gu Y."/>
            <person name="Gwilliam R."/>
            <person name="Hamilton C."/>
            <person name="Hart E.A."/>
            <person name="Hawes A."/>
            <person name="Heath P.D."/>
            <person name="Heitmann K."/>
            <person name="Hennig S."/>
            <person name="Hernandez J."/>
            <person name="Hinzmann B."/>
            <person name="Ho S."/>
            <person name="Hoffs M."/>
            <person name="Howden P.J."/>
            <person name="Huckle E.J."/>
            <person name="Hume J."/>
            <person name="Hunt P.J."/>
            <person name="Hunt A.R."/>
            <person name="Isherwood J."/>
            <person name="Jacob L."/>
            <person name="Johnson D."/>
            <person name="Jones S."/>
            <person name="de Jong P.J."/>
            <person name="Joseph S.S."/>
            <person name="Keenan S."/>
            <person name="Kelly S."/>
            <person name="Kershaw J.K."/>
            <person name="Khan Z."/>
            <person name="Kioschis P."/>
            <person name="Klages S."/>
            <person name="Knights A.J."/>
            <person name="Kosiura A."/>
            <person name="Kovar-Smith C."/>
            <person name="Laird G.K."/>
            <person name="Langford C."/>
            <person name="Lawlor S."/>
            <person name="Leversha M."/>
            <person name="Lewis L."/>
            <person name="Liu W."/>
            <person name="Lloyd C."/>
            <person name="Lloyd D.M."/>
            <person name="Loulseged H."/>
            <person name="Loveland J.E."/>
            <person name="Lovell J.D."/>
            <person name="Lozado R."/>
            <person name="Lu J."/>
            <person name="Lyne R."/>
            <person name="Ma J."/>
            <person name="Maheshwari M."/>
            <person name="Matthews L.H."/>
            <person name="McDowall J."/>
            <person name="McLaren S."/>
            <person name="McMurray A."/>
            <person name="Meidl P."/>
            <person name="Meitinger T."/>
            <person name="Milne S."/>
            <person name="Miner G."/>
            <person name="Mistry S.L."/>
            <person name="Morgan M."/>
            <person name="Morris S."/>
            <person name="Mueller I."/>
            <person name="Mullikin J.C."/>
            <person name="Nguyen N."/>
            <person name="Nordsiek G."/>
            <person name="Nyakatura G."/>
            <person name="O'dell C.N."/>
            <person name="Okwuonu G."/>
            <person name="Palmer S."/>
            <person name="Pandian R."/>
            <person name="Parker D."/>
            <person name="Parrish J."/>
            <person name="Pasternak S."/>
            <person name="Patel D."/>
            <person name="Pearce A.V."/>
            <person name="Pearson D.M."/>
            <person name="Pelan S.E."/>
            <person name="Perez L."/>
            <person name="Porter K.M."/>
            <person name="Ramsey Y."/>
            <person name="Reichwald K."/>
            <person name="Rhodes S."/>
            <person name="Ridler K.A."/>
            <person name="Schlessinger D."/>
            <person name="Schueler M.G."/>
            <person name="Sehra H.K."/>
            <person name="Shaw-Smith C."/>
            <person name="Shen H."/>
            <person name="Sheridan E.M."/>
            <person name="Shownkeen R."/>
            <person name="Skuce C.D."/>
            <person name="Smith M.L."/>
            <person name="Sotheran E.C."/>
            <person name="Steingruber H.E."/>
            <person name="Steward C.A."/>
            <person name="Storey R."/>
            <person name="Swann R.M."/>
            <person name="Swarbreck D."/>
            <person name="Tabor P.E."/>
            <person name="Taudien S."/>
            <person name="Taylor T."/>
            <person name="Teague B."/>
            <person name="Thomas K."/>
            <person name="Thorpe A."/>
            <person name="Timms K."/>
            <person name="Tracey A."/>
            <person name="Trevanion S."/>
            <person name="Tromans A.C."/>
            <person name="d'Urso M."/>
            <person name="Verduzco D."/>
            <person name="Villasana D."/>
            <person name="Waldron L."/>
            <person name="Wall M."/>
            <person name="Wang Q."/>
            <person name="Warren J."/>
            <person name="Warry G.L."/>
            <person name="Wei X."/>
            <person name="West A."/>
            <person name="Whitehead S.L."/>
            <person name="Whiteley M.N."/>
            <person name="Wilkinson J.E."/>
            <person name="Willey D.L."/>
            <person name="Williams G."/>
            <person name="Williams L."/>
            <person name="Williamson A."/>
            <person name="Williamson H."/>
            <person name="Wilming L."/>
            <person name="Woodmansey R.L."/>
            <person name="Wray P.W."/>
            <person name="Yen J."/>
            <person name="Zhang J."/>
            <person name="Zhou J."/>
            <person name="Zoghbi H."/>
            <person name="Zorilla S."/>
            <person name="Buck D."/>
            <person name="Reinhardt R."/>
            <person name="Poustka A."/>
            <person name="Rosenthal A."/>
            <person name="Lehrach H."/>
            <person name="Meindl A."/>
            <person name="Minx P.J."/>
            <person name="Hillier L.W."/>
            <person name="Willard H.F."/>
            <person name="Wilson R.K."/>
            <person name="Waterston R.H."/>
            <person name="Rice C.M."/>
            <person name="Vaudin M."/>
            <person name="Coulson A."/>
            <person name="Nelson D.L."/>
            <person name="Weinstock G."/>
            <person name="Sulston J.E."/>
            <person name="Durbin R.M."/>
            <person name="Hubbard T."/>
            <person name="Gibbs R.A."/>
            <person name="Beck S."/>
            <person name="Rogers J."/>
            <person name="Bentley D.R."/>
        </authorList>
    </citation>
    <scope>NUCLEOTIDE SEQUENCE [LARGE SCALE GENOMIC DNA]</scope>
</reference>
<reference key="6">
    <citation type="submission" date="2005-09" db="EMBL/GenBank/DDBJ databases">
        <authorList>
            <person name="Mural R.J."/>
            <person name="Istrail S."/>
            <person name="Sutton G.G."/>
            <person name="Florea L."/>
            <person name="Halpern A.L."/>
            <person name="Mobarry C.M."/>
            <person name="Lippert R."/>
            <person name="Walenz B."/>
            <person name="Shatkay H."/>
            <person name="Dew I."/>
            <person name="Miller J.R."/>
            <person name="Flanigan M.J."/>
            <person name="Edwards N.J."/>
            <person name="Bolanos R."/>
            <person name="Fasulo D."/>
            <person name="Halldorsson B.V."/>
            <person name="Hannenhalli S."/>
            <person name="Turner R."/>
            <person name="Yooseph S."/>
            <person name="Lu F."/>
            <person name="Nusskern D.R."/>
            <person name="Shue B.C."/>
            <person name="Zheng X.H."/>
            <person name="Zhong F."/>
            <person name="Delcher A.L."/>
            <person name="Huson D.H."/>
            <person name="Kravitz S.A."/>
            <person name="Mouchard L."/>
            <person name="Reinert K."/>
            <person name="Remington K.A."/>
            <person name="Clark A.G."/>
            <person name="Waterman M.S."/>
            <person name="Eichler E.E."/>
            <person name="Adams M.D."/>
            <person name="Hunkapiller M.W."/>
            <person name="Myers E.W."/>
            <person name="Venter J.C."/>
        </authorList>
    </citation>
    <scope>NUCLEOTIDE SEQUENCE [LARGE SCALE GENOMIC DNA]</scope>
</reference>
<reference key="7">
    <citation type="journal article" date="2004" name="Genome Res.">
        <title>The status, quality, and expansion of the NIH full-length cDNA project: the Mammalian Gene Collection (MGC).</title>
        <authorList>
            <consortium name="The MGC Project Team"/>
        </authorList>
    </citation>
    <scope>NUCLEOTIDE SEQUENCE [LARGE SCALE MRNA] (ISOFORM 1)</scope>
    <source>
        <tissue>Brain</tissue>
    </source>
</reference>
<sequence length="460" mass="52542">MAESENRKELSESSQEEAGNQIMVEGLGEHLERGEDAAAGLGDDGKCGEEAAAGLGEEGENGEDTAAGSGEDGKKGGDTDEDSEADRPKGLIGYVLDTDFVESLPVKVKYRVLALKKLQTRAANLESKFLREFHDIERKFAEMYQPLLEKRRQIINAIYEPTEEECEYKSDSEDCDDEEMCHEEMYGNEEGMVHEYVDEDDGYEDYYYDYAVEEEEEEEEEDDIEATGEENKEEEDPKGIPDFWLTVLKNVDTLTPLIKKYDEPILKLLTDIKVKLSDPGEPLSFTLEFHFKPNEYFKNELLTKTYVLKSKLAYYDPHPYRGTAIEYSTGCEIDWNEGKNVTLKTIKKKQKHRIWGTIRTVTEDFPKDSFFNFFSPHGITSNGRDGNDDFLLGHNLRTYIIPRSVLFFSGDALESQQEGVVREVNDAIYDKIIYDNWMAAIEEVKACCKNLEALVEDIDR</sequence>
<evidence type="ECO:0000250" key="1"/>
<evidence type="ECO:0000255" key="2"/>
<evidence type="ECO:0000256" key="3">
    <source>
        <dbReference type="SAM" id="MobiDB-lite"/>
    </source>
</evidence>
<evidence type="ECO:0000303" key="4">
    <source>
    </source>
</evidence>
<evidence type="ECO:0000305" key="5"/>
<name>NP1L2_HUMAN</name>
<keyword id="KW-0025">Alternative splicing</keyword>
<keyword id="KW-0539">Nucleus</keyword>
<keyword id="KW-1267">Proteomics identification</keyword>
<keyword id="KW-1185">Reference proteome</keyword>
<comment type="function">
    <text evidence="1">Acidic protein which may be involved in interactions with other proteins or DNA.</text>
</comment>
<comment type="interaction">
    <interactant intactId="EBI-3911716">
        <id>Q9ULW6</id>
    </interactant>
    <interactant intactId="EBI-10749669">
        <id>Q8IYE0</id>
        <label>CCDC146</label>
    </interactant>
    <organismsDiffer>false</organismsDiffer>
    <experiments>3</experiments>
</comment>
<comment type="interaction">
    <interactant intactId="EBI-3911716">
        <id>Q9ULW6</id>
    </interactant>
    <interactant intactId="EBI-740814">
        <id>Q8N715</id>
        <label>CCDC185</label>
    </interactant>
    <organismsDiffer>false</organismsDiffer>
    <experiments>3</experiments>
</comment>
<comment type="interaction">
    <interactant intactId="EBI-3911716">
        <id>Q9ULW6</id>
    </interactant>
    <interactant intactId="EBI-399105">
        <id>Q9NPF5</id>
        <label>DMAP1</label>
    </interactant>
    <organismsDiffer>false</organismsDiffer>
    <experiments>3</experiments>
</comment>
<comment type="interaction">
    <interactant intactId="EBI-3911716">
        <id>Q9ULW6</id>
    </interactant>
    <interactant intactId="EBI-11993062">
        <id>Q8TBF8</id>
        <label>FAM81A</label>
    </interactant>
    <organismsDiffer>false</organismsDiffer>
    <experiments>3</experiments>
</comment>
<comment type="interaction">
    <interactant intactId="EBI-3911716">
        <id>Q9ULW6</id>
    </interactant>
    <interactant intactId="EBI-466029">
        <id>P42858</id>
        <label>HTT</label>
    </interactant>
    <organismsDiffer>false</organismsDiffer>
    <experiments>3</experiments>
</comment>
<comment type="interaction">
    <interactant intactId="EBI-3911716">
        <id>Q9ULW6</id>
    </interactant>
    <interactant intactId="EBI-746999">
        <id>O95198</id>
        <label>KLHL2</label>
    </interactant>
    <organismsDiffer>false</organismsDiffer>
    <experiments>3</experiments>
</comment>
<comment type="interaction">
    <interactant intactId="EBI-3911716">
        <id>Q9ULW6</id>
    </interactant>
    <interactant intactId="EBI-394659">
        <id>Q96HR3</id>
        <label>MED30</label>
    </interactant>
    <organismsDiffer>false</organismsDiffer>
    <experiments>3</experiments>
</comment>
<comment type="interaction">
    <interactant intactId="EBI-3911716">
        <id>Q9ULW6</id>
    </interactant>
    <interactant intactId="EBI-356392">
        <id>P55209</id>
        <label>NAP1L1</label>
    </interactant>
    <organismsDiffer>false</organismsDiffer>
    <experiments>3</experiments>
</comment>
<comment type="interaction">
    <interactant intactId="EBI-3911716">
        <id>Q9ULW6</id>
    </interactant>
    <interactant intactId="EBI-8645631">
        <id>Q99457</id>
        <label>NAP1L3</label>
    </interactant>
    <organismsDiffer>false</organismsDiffer>
    <experiments>4</experiments>
</comment>
<comment type="interaction">
    <interactant intactId="EBI-3911716">
        <id>Q9ULW6</id>
    </interactant>
    <interactant intactId="EBI-713627">
        <id>Q96NT1</id>
        <label>NAP1L5</label>
    </interactant>
    <organismsDiffer>false</organismsDiffer>
    <experiments>5</experiments>
</comment>
<comment type="interaction">
    <interactant intactId="EBI-3911716">
        <id>Q9ULW6</id>
    </interactant>
    <interactant intactId="EBI-1105153">
        <id>Q96KQ4</id>
        <label>PPP1R13B</label>
    </interactant>
    <organismsDiffer>false</organismsDiffer>
    <experiments>3</experiments>
</comment>
<comment type="interaction">
    <interactant intactId="EBI-3911716">
        <id>Q9ULW6</id>
    </interactant>
    <interactant intactId="EBI-748391">
        <id>Q9BWG6</id>
        <label>SCNM1</label>
    </interactant>
    <organismsDiffer>false</organismsDiffer>
    <experiments>3</experiments>
</comment>
<comment type="interaction">
    <interactant intactId="EBI-3911716">
        <id>Q9ULW6</id>
    </interactant>
    <interactant intactId="EBI-624860">
        <id>O60239</id>
        <label>SH3BP5</label>
    </interactant>
    <organismsDiffer>false</organismsDiffer>
    <experiments>3</experiments>
</comment>
<comment type="interaction">
    <interactant intactId="EBI-3911716">
        <id>Q9ULW6</id>
    </interactant>
    <interactant intactId="EBI-11952721">
        <id>Q05BL1</id>
        <label>TP53BP2</label>
    </interactant>
    <organismsDiffer>false</organismsDiffer>
    <experiments>3</experiments>
</comment>
<comment type="interaction">
    <interactant intactId="EBI-3911716">
        <id>Q9ULW6</id>
    </interactant>
    <interactant intactId="EBI-6863748">
        <id>PRO_0000037551</id>
        <dbReference type="UniProtKB" id="Q9WMX2"/>
    </interactant>
    <organismsDiffer>true</organismsDiffer>
    <experiments>2</experiments>
</comment>
<comment type="subcellular location">
    <subcellularLocation>
        <location evidence="5">Nucleus</location>
    </subcellularLocation>
</comment>
<comment type="alternative products">
    <event type="alternative splicing"/>
    <isoform>
        <id>Q9ULW6-1</id>
        <name>1</name>
        <sequence type="displayed"/>
    </isoform>
    <isoform>
        <id>Q9ULW6-2</id>
        <name>2</name>
        <sequence type="described" ref="VSP_057064"/>
    </isoform>
</comment>
<comment type="similarity">
    <text evidence="5">Belongs to the nucleosome assembly protein (NAP) family.</text>
</comment>
<dbReference type="EMBL" id="AB027013">
    <property type="protein sequence ID" value="BAA84706.1"/>
    <property type="molecule type" value="mRNA"/>
</dbReference>
<dbReference type="EMBL" id="AF136178">
    <property type="protein sequence ID" value="AAP97268.1"/>
    <property type="molecule type" value="mRNA"/>
</dbReference>
<dbReference type="EMBL" id="CR457095">
    <property type="protein sequence ID" value="CAG33376.1"/>
    <property type="molecule type" value="mRNA"/>
</dbReference>
<dbReference type="EMBL" id="AK303676">
    <property type="protein sequence ID" value="BAG64673.1"/>
    <property type="molecule type" value="mRNA"/>
</dbReference>
<dbReference type="EMBL" id="AK316569">
    <property type="protein sequence ID" value="BAG38158.1"/>
    <property type="molecule type" value="mRNA"/>
</dbReference>
<dbReference type="EMBL" id="AC004074">
    <property type="status" value="NOT_ANNOTATED_CDS"/>
    <property type="molecule type" value="Genomic_DNA"/>
</dbReference>
<dbReference type="EMBL" id="CH471104">
    <property type="protein sequence ID" value="EAW98670.1"/>
    <property type="molecule type" value="Genomic_DNA"/>
</dbReference>
<dbReference type="EMBL" id="BC026325">
    <property type="protein sequence ID" value="AAH26325.1"/>
    <property type="molecule type" value="mRNA"/>
</dbReference>
<dbReference type="CCDS" id="CCDS14423.1">
    <molecule id="Q9ULW6-1"/>
</dbReference>
<dbReference type="RefSeq" id="NP_068798.1">
    <molecule id="Q9ULW6-1"/>
    <property type="nucleotide sequence ID" value="NM_021963.4"/>
</dbReference>
<dbReference type="SMR" id="Q9ULW6"/>
<dbReference type="BioGRID" id="110755">
    <property type="interactions" value="38"/>
</dbReference>
<dbReference type="FunCoup" id="Q9ULW6">
    <property type="interactions" value="361"/>
</dbReference>
<dbReference type="IntAct" id="Q9ULW6">
    <property type="interactions" value="36"/>
</dbReference>
<dbReference type="STRING" id="9606.ENSP00000362616"/>
<dbReference type="GlyGen" id="Q9ULW6">
    <property type="glycosylation" value="1 site, 1 O-linked glycan (1 site)"/>
</dbReference>
<dbReference type="iPTMnet" id="Q9ULW6"/>
<dbReference type="PhosphoSitePlus" id="Q9ULW6"/>
<dbReference type="BioMuta" id="NAP1L2"/>
<dbReference type="DMDM" id="22256943"/>
<dbReference type="jPOST" id="Q9ULW6"/>
<dbReference type="MassIVE" id="Q9ULW6"/>
<dbReference type="PaxDb" id="9606-ENSP00000362616"/>
<dbReference type="PeptideAtlas" id="Q9ULW6"/>
<dbReference type="ProteomicsDB" id="5729"/>
<dbReference type="ProteomicsDB" id="85143">
    <molecule id="Q9ULW6-1"/>
</dbReference>
<dbReference type="Antibodypedia" id="27991">
    <property type="antibodies" value="130 antibodies from 19 providers"/>
</dbReference>
<dbReference type="DNASU" id="4674"/>
<dbReference type="Ensembl" id="ENST00000373517.4">
    <molecule id="Q9ULW6-1"/>
    <property type="protein sequence ID" value="ENSP00000362616.3"/>
    <property type="gene ID" value="ENSG00000186462.9"/>
</dbReference>
<dbReference type="GeneID" id="4674"/>
<dbReference type="KEGG" id="hsa:4674"/>
<dbReference type="MANE-Select" id="ENST00000373517.4">
    <property type="protein sequence ID" value="ENSP00000362616.3"/>
    <property type="RefSeq nucleotide sequence ID" value="NM_021963.4"/>
    <property type="RefSeq protein sequence ID" value="NP_068798.1"/>
</dbReference>
<dbReference type="UCSC" id="uc004ebi.4">
    <molecule id="Q9ULW6-1"/>
    <property type="organism name" value="human"/>
</dbReference>
<dbReference type="AGR" id="HGNC:7638"/>
<dbReference type="CTD" id="4674"/>
<dbReference type="DisGeNET" id="4674"/>
<dbReference type="GeneCards" id="NAP1L2"/>
<dbReference type="HGNC" id="HGNC:7638">
    <property type="gene designation" value="NAP1L2"/>
</dbReference>
<dbReference type="HPA" id="ENSG00000186462">
    <property type="expression patterns" value="Tissue enriched (brain)"/>
</dbReference>
<dbReference type="MIM" id="300026">
    <property type="type" value="gene"/>
</dbReference>
<dbReference type="neXtProt" id="NX_Q9ULW6"/>
<dbReference type="OpenTargets" id="ENSG00000186462"/>
<dbReference type="PharmGKB" id="PA31440"/>
<dbReference type="VEuPathDB" id="HostDB:ENSG00000186462"/>
<dbReference type="eggNOG" id="KOG1507">
    <property type="taxonomic scope" value="Eukaryota"/>
</dbReference>
<dbReference type="GeneTree" id="ENSGT00940000163372"/>
<dbReference type="HOGENOM" id="CLU_038841_3_1_1"/>
<dbReference type="InParanoid" id="Q9ULW6"/>
<dbReference type="OMA" id="WMAAIEE"/>
<dbReference type="OrthoDB" id="27325at2759"/>
<dbReference type="PAN-GO" id="Q9ULW6">
    <property type="GO annotations" value="5 GO annotations based on evolutionary models"/>
</dbReference>
<dbReference type="PhylomeDB" id="Q9ULW6"/>
<dbReference type="TreeFam" id="TF314349"/>
<dbReference type="PathwayCommons" id="Q9ULW6"/>
<dbReference type="SignaLink" id="Q9ULW6"/>
<dbReference type="BioGRID-ORCS" id="4674">
    <property type="hits" value="9 hits in 772 CRISPR screens"/>
</dbReference>
<dbReference type="GenomeRNAi" id="4674"/>
<dbReference type="Pharos" id="Q9ULW6">
    <property type="development level" value="Tbio"/>
</dbReference>
<dbReference type="PRO" id="PR:Q9ULW6"/>
<dbReference type="Proteomes" id="UP000005640">
    <property type="component" value="Chromosome X"/>
</dbReference>
<dbReference type="RNAct" id="Q9ULW6">
    <property type="molecule type" value="protein"/>
</dbReference>
<dbReference type="Bgee" id="ENSG00000186462">
    <property type="expression patterns" value="Expressed in endothelial cell and 168 other cell types or tissues"/>
</dbReference>
<dbReference type="GO" id="GO:0000785">
    <property type="term" value="C:chromatin"/>
    <property type="evidence" value="ECO:0000318"/>
    <property type="project" value="GO_Central"/>
</dbReference>
<dbReference type="GO" id="GO:0005634">
    <property type="term" value="C:nucleus"/>
    <property type="evidence" value="ECO:0000318"/>
    <property type="project" value="GO_Central"/>
</dbReference>
<dbReference type="GO" id="GO:0003682">
    <property type="term" value="F:chromatin binding"/>
    <property type="evidence" value="ECO:0000318"/>
    <property type="project" value="GO_Central"/>
</dbReference>
<dbReference type="GO" id="GO:0035034">
    <property type="term" value="F:histone acetyltransferase regulator activity"/>
    <property type="evidence" value="ECO:0007669"/>
    <property type="project" value="Ensembl"/>
</dbReference>
<dbReference type="GO" id="GO:0042393">
    <property type="term" value="F:histone binding"/>
    <property type="evidence" value="ECO:0000318"/>
    <property type="project" value="GO_Central"/>
</dbReference>
<dbReference type="GO" id="GO:0030182">
    <property type="term" value="P:neuron differentiation"/>
    <property type="evidence" value="ECO:0007669"/>
    <property type="project" value="Ensembl"/>
</dbReference>
<dbReference type="GO" id="GO:0006334">
    <property type="term" value="P:nucleosome assembly"/>
    <property type="evidence" value="ECO:0000318"/>
    <property type="project" value="GO_Central"/>
</dbReference>
<dbReference type="GO" id="GO:0045666">
    <property type="term" value="P:positive regulation of neuron differentiation"/>
    <property type="evidence" value="ECO:0007669"/>
    <property type="project" value="Ensembl"/>
</dbReference>
<dbReference type="GO" id="GO:2000035">
    <property type="term" value="P:regulation of stem cell division"/>
    <property type="evidence" value="ECO:0007669"/>
    <property type="project" value="Ensembl"/>
</dbReference>
<dbReference type="FunFam" id="1.20.5.1500:FF:000001">
    <property type="entry name" value="Nucleosome assembly protein 1-like 1"/>
    <property type="match status" value="1"/>
</dbReference>
<dbReference type="FunFam" id="3.30.1120.90:FF:000001">
    <property type="entry name" value="Nucleosome assembly protein 1-like 1"/>
    <property type="match status" value="1"/>
</dbReference>
<dbReference type="Gene3D" id="1.20.5.1500">
    <property type="match status" value="1"/>
</dbReference>
<dbReference type="Gene3D" id="3.30.1120.90">
    <property type="entry name" value="Nucleosome assembly protein"/>
    <property type="match status" value="1"/>
</dbReference>
<dbReference type="InterPro" id="IPR037231">
    <property type="entry name" value="NAP-like_sf"/>
</dbReference>
<dbReference type="InterPro" id="IPR002164">
    <property type="entry name" value="NAP_family"/>
</dbReference>
<dbReference type="PANTHER" id="PTHR11875">
    <property type="entry name" value="TESTIS-SPECIFIC Y-ENCODED PROTEIN"/>
    <property type="match status" value="1"/>
</dbReference>
<dbReference type="Pfam" id="PF00956">
    <property type="entry name" value="NAP"/>
    <property type="match status" value="1"/>
</dbReference>
<dbReference type="SUPFAM" id="SSF143113">
    <property type="entry name" value="NAP-like"/>
    <property type="match status" value="1"/>
</dbReference>
<organism>
    <name type="scientific">Homo sapiens</name>
    <name type="common">Human</name>
    <dbReference type="NCBI Taxonomy" id="9606"/>
    <lineage>
        <taxon>Eukaryota</taxon>
        <taxon>Metazoa</taxon>
        <taxon>Chordata</taxon>
        <taxon>Craniata</taxon>
        <taxon>Vertebrata</taxon>
        <taxon>Euteleostomi</taxon>
        <taxon>Mammalia</taxon>
        <taxon>Eutheria</taxon>
        <taxon>Euarchontoglires</taxon>
        <taxon>Primates</taxon>
        <taxon>Haplorrhini</taxon>
        <taxon>Catarrhini</taxon>
        <taxon>Hominidae</taxon>
        <taxon>Homo</taxon>
    </lineage>
</organism>
<accession>Q9ULW6</accession>
<accession>B2RE61</accession>
<accession>B4E161</accession>
<accession>Q8TAN6</accession>
<proteinExistence type="evidence at protein level"/>